<evidence type="ECO:0000255" key="1">
    <source>
        <dbReference type="HAMAP-Rule" id="MF_00093"/>
    </source>
</evidence>
<dbReference type="EMBL" id="CP000509">
    <property type="protein sequence ID" value="ABL81264.1"/>
    <property type="molecule type" value="Genomic_DNA"/>
</dbReference>
<dbReference type="RefSeq" id="WP_011755211.1">
    <property type="nucleotide sequence ID" value="NC_008699.1"/>
</dbReference>
<dbReference type="SMR" id="A1SHH9"/>
<dbReference type="STRING" id="196162.Noca_1751"/>
<dbReference type="KEGG" id="nca:Noca_1751"/>
<dbReference type="eggNOG" id="COG0216">
    <property type="taxonomic scope" value="Bacteria"/>
</dbReference>
<dbReference type="HOGENOM" id="CLU_036856_0_1_11"/>
<dbReference type="OrthoDB" id="9806673at2"/>
<dbReference type="Proteomes" id="UP000000640">
    <property type="component" value="Chromosome"/>
</dbReference>
<dbReference type="GO" id="GO:0005737">
    <property type="term" value="C:cytoplasm"/>
    <property type="evidence" value="ECO:0007669"/>
    <property type="project" value="UniProtKB-SubCell"/>
</dbReference>
<dbReference type="GO" id="GO:0016149">
    <property type="term" value="F:translation release factor activity, codon specific"/>
    <property type="evidence" value="ECO:0007669"/>
    <property type="project" value="UniProtKB-UniRule"/>
</dbReference>
<dbReference type="FunFam" id="3.30.160.20:FF:000004">
    <property type="entry name" value="Peptide chain release factor 1"/>
    <property type="match status" value="1"/>
</dbReference>
<dbReference type="FunFam" id="3.30.70.1660:FF:000002">
    <property type="entry name" value="Peptide chain release factor 1"/>
    <property type="match status" value="1"/>
</dbReference>
<dbReference type="Gene3D" id="3.30.160.20">
    <property type="match status" value="1"/>
</dbReference>
<dbReference type="Gene3D" id="3.30.70.1660">
    <property type="match status" value="1"/>
</dbReference>
<dbReference type="Gene3D" id="6.10.140.1950">
    <property type="match status" value="1"/>
</dbReference>
<dbReference type="HAMAP" id="MF_00093">
    <property type="entry name" value="Rel_fac_1"/>
    <property type="match status" value="1"/>
</dbReference>
<dbReference type="InterPro" id="IPR005139">
    <property type="entry name" value="PCRF"/>
</dbReference>
<dbReference type="InterPro" id="IPR000352">
    <property type="entry name" value="Pep_chain_release_fac_I"/>
</dbReference>
<dbReference type="InterPro" id="IPR045853">
    <property type="entry name" value="Pep_chain_release_fac_I_sf"/>
</dbReference>
<dbReference type="InterPro" id="IPR050057">
    <property type="entry name" value="Prokaryotic/Mito_RF"/>
</dbReference>
<dbReference type="InterPro" id="IPR004373">
    <property type="entry name" value="RF-1"/>
</dbReference>
<dbReference type="NCBIfam" id="TIGR00019">
    <property type="entry name" value="prfA"/>
    <property type="match status" value="1"/>
</dbReference>
<dbReference type="NCBIfam" id="NF001859">
    <property type="entry name" value="PRK00591.1"/>
    <property type="match status" value="1"/>
</dbReference>
<dbReference type="PANTHER" id="PTHR43804">
    <property type="entry name" value="LD18447P"/>
    <property type="match status" value="1"/>
</dbReference>
<dbReference type="PANTHER" id="PTHR43804:SF7">
    <property type="entry name" value="LD18447P"/>
    <property type="match status" value="1"/>
</dbReference>
<dbReference type="Pfam" id="PF03462">
    <property type="entry name" value="PCRF"/>
    <property type="match status" value="1"/>
</dbReference>
<dbReference type="Pfam" id="PF00472">
    <property type="entry name" value="RF-1"/>
    <property type="match status" value="1"/>
</dbReference>
<dbReference type="SMART" id="SM00937">
    <property type="entry name" value="PCRF"/>
    <property type="match status" value="1"/>
</dbReference>
<dbReference type="SUPFAM" id="SSF75620">
    <property type="entry name" value="Release factor"/>
    <property type="match status" value="1"/>
</dbReference>
<dbReference type="PROSITE" id="PS00745">
    <property type="entry name" value="RF_PROK_I"/>
    <property type="match status" value="1"/>
</dbReference>
<keyword id="KW-0963">Cytoplasm</keyword>
<keyword id="KW-0488">Methylation</keyword>
<keyword id="KW-0648">Protein biosynthesis</keyword>
<keyword id="KW-1185">Reference proteome</keyword>
<gene>
    <name evidence="1" type="primary">prfA</name>
    <name type="ordered locus">Noca_1751</name>
</gene>
<feature type="chain" id="PRO_1000004923" description="Peptide chain release factor 1">
    <location>
        <begin position="1"/>
        <end position="357"/>
    </location>
</feature>
<feature type="modified residue" description="N5-methylglutamine" evidence="1">
    <location>
        <position position="234"/>
    </location>
</feature>
<name>RF1_NOCSJ</name>
<comment type="function">
    <text evidence="1">Peptide chain release factor 1 directs the termination of translation in response to the peptide chain termination codons UAG and UAA.</text>
</comment>
<comment type="subcellular location">
    <subcellularLocation>
        <location evidence="1">Cytoplasm</location>
    </subcellularLocation>
</comment>
<comment type="PTM">
    <text evidence="1">Methylated by PrmC. Methylation increases the termination efficiency of RF1.</text>
</comment>
<comment type="similarity">
    <text evidence="1">Belongs to the prokaryotic/mitochondrial release factor family.</text>
</comment>
<organism>
    <name type="scientific">Nocardioides sp. (strain ATCC BAA-499 / JS614)</name>
    <dbReference type="NCBI Taxonomy" id="196162"/>
    <lineage>
        <taxon>Bacteria</taxon>
        <taxon>Bacillati</taxon>
        <taxon>Actinomycetota</taxon>
        <taxon>Actinomycetes</taxon>
        <taxon>Propionibacteriales</taxon>
        <taxon>Nocardioidaceae</taxon>
        <taxon>Nocardioides</taxon>
    </lineage>
</organism>
<protein>
    <recommendedName>
        <fullName evidence="1">Peptide chain release factor 1</fullName>
        <shortName evidence="1">RF-1</shortName>
    </recommendedName>
</protein>
<accession>A1SHH9</accession>
<sequence length="357" mass="39287">MFEAVEGMLAEHADLEQRLGAPETHADARLAKQLNQRYAALSSIIGAYRELQQLDDDIEAARELAQEDPAFAEEAAALTGRRQEVEERLRRLLVPRDAADDKDAILEVKSGEGGEESALFAGDLLRMYTRYAEARGWKVEVLDAAESDLGGYKSVTVAVKAKGTPEPGEAPYALLKFEGGVHRVQRVPVTESQGRVHTSAAGVLVLPEAEQVDVQIDENDLRIDVFRSSGPGGQSVNTTDSAVRITHLPTGIVVSCQNEKSQLQNREQAMRILRSRLLAAAQEKADAEAGEARRSQVRTVDRSERIRTYNFPENRISDHRTGYKAYNLDQVLDGDLQPVLDSCVEADLAARLEALEQ</sequence>
<proteinExistence type="inferred from homology"/>
<reference key="1">
    <citation type="submission" date="2006-12" db="EMBL/GenBank/DDBJ databases">
        <title>Complete sequence of chromosome 1 of Nocardioides sp. JS614.</title>
        <authorList>
            <person name="Copeland A."/>
            <person name="Lucas S."/>
            <person name="Lapidus A."/>
            <person name="Barry K."/>
            <person name="Detter J.C."/>
            <person name="Glavina del Rio T."/>
            <person name="Hammon N."/>
            <person name="Israni S."/>
            <person name="Dalin E."/>
            <person name="Tice H."/>
            <person name="Pitluck S."/>
            <person name="Thompson L.S."/>
            <person name="Brettin T."/>
            <person name="Bruce D."/>
            <person name="Han C."/>
            <person name="Tapia R."/>
            <person name="Schmutz J."/>
            <person name="Larimer F."/>
            <person name="Land M."/>
            <person name="Hauser L."/>
            <person name="Kyrpides N."/>
            <person name="Kim E."/>
            <person name="Mattes T."/>
            <person name="Gossett J."/>
            <person name="Richardson P."/>
        </authorList>
    </citation>
    <scope>NUCLEOTIDE SEQUENCE [LARGE SCALE GENOMIC DNA]</scope>
    <source>
        <strain>ATCC BAA-499 / JS614</strain>
    </source>
</reference>